<accession>Q9XPI7</accession>
<evidence type="ECO:0000305" key="1"/>
<proteinExistence type="inferred from homology"/>
<organism>
    <name type="scientific">Dictyostelium discoideum</name>
    <name type="common">Social amoeba</name>
    <dbReference type="NCBI Taxonomy" id="44689"/>
    <lineage>
        <taxon>Eukaryota</taxon>
        <taxon>Amoebozoa</taxon>
        <taxon>Evosea</taxon>
        <taxon>Eumycetozoa</taxon>
        <taxon>Dictyostelia</taxon>
        <taxon>Dictyosteliales</taxon>
        <taxon>Dictyosteliaceae</taxon>
        <taxon>Dictyostelium</taxon>
    </lineage>
</organism>
<protein>
    <recommendedName>
        <fullName evidence="1">Small ribosomal subunit protein uS2m</fullName>
    </recommendedName>
    <alternativeName>
        <fullName>Ribosomal protein S2, mitochondrial</fullName>
        <shortName>MRP-S2</shortName>
        <shortName>S2mt</shortName>
    </alternativeName>
</protein>
<reference key="1">
    <citation type="journal article" date="2000" name="Mol. Gen. Genet.">
        <title>The mitochondrial DNA of Dictyostelium discoideum: complete sequence, gene content and genome organization.</title>
        <authorList>
            <person name="Ogawa S."/>
            <person name="Yoshino R."/>
            <person name="Angata K."/>
            <person name="Iwamoto M."/>
            <person name="Pi M."/>
            <person name="Kuroe K."/>
            <person name="Matsuo K."/>
            <person name="Morio T."/>
            <person name="Urushihara H."/>
            <person name="Yanagisawa K."/>
            <person name="Tanaka Y."/>
        </authorList>
    </citation>
    <scope>NUCLEOTIDE SEQUENCE [LARGE SCALE GENOMIC DNA]</scope>
    <source>
        <strain>AX3</strain>
    </source>
</reference>
<name>RT02_DICDI</name>
<geneLocation type="mitochondrion"/>
<feature type="chain" id="PRO_0000312382" description="Small ribosomal subunit protein uS2m">
    <location>
        <begin position="1"/>
        <end position="244"/>
    </location>
</feature>
<sequence>MIKKLKGRQRIQLIACNNINYVYKTEFHLGESAWKWNPTLKSFIYKEISQIHIIRIPAFLLIIGKVLNLIREVMRFRGKVVIVANNLANGKVIERLVKTMRQPALLTKYYAGGLTRKTENLRQYLEADKGLTNLKVRSKYIKQLIGLQDLERKPAYIVILDAIQGKFLINESAILGIPTIGCGDTTINFPKLNYPLIGNFKSREKRGSVLLLIKHAMFEGMRQEATIFAEYYNKYTRMYKSFLK</sequence>
<comment type="subcellular location">
    <subcellularLocation>
        <location>Mitochondrion</location>
    </subcellularLocation>
</comment>
<comment type="similarity">
    <text evidence="1">Belongs to the universal ribosomal protein uS2 family.</text>
</comment>
<keyword id="KW-0496">Mitochondrion</keyword>
<keyword id="KW-1185">Reference proteome</keyword>
<keyword id="KW-0687">Ribonucleoprotein</keyword>
<keyword id="KW-0689">Ribosomal protein</keyword>
<dbReference type="EMBL" id="AB000109">
    <property type="protein sequence ID" value="BAA78089.1"/>
    <property type="molecule type" value="Genomic_DNA"/>
</dbReference>
<dbReference type="PIR" id="T43786">
    <property type="entry name" value="T43786"/>
</dbReference>
<dbReference type="RefSeq" id="NP_050107.1">
    <property type="nucleotide sequence ID" value="NC_000895.1"/>
</dbReference>
<dbReference type="SMR" id="Q9XPI7"/>
<dbReference type="FunCoup" id="Q9XPI7">
    <property type="interactions" value="16"/>
</dbReference>
<dbReference type="STRING" id="44689.Q9XPI7"/>
<dbReference type="GeneID" id="2193934"/>
<dbReference type="KEGG" id="ddi:DidioMp40"/>
<dbReference type="dictyBase" id="DDB_G0294050">
    <property type="gene designation" value="mrps2"/>
</dbReference>
<dbReference type="VEuPathDB" id="AmoebaDB:DidioMp40"/>
<dbReference type="InParanoid" id="Q9XPI7"/>
<dbReference type="PhylomeDB" id="Q9XPI7"/>
<dbReference type="Reactome" id="R-DDI-9837999">
    <property type="pathway name" value="Mitochondrial protein degradation"/>
</dbReference>
<dbReference type="PRO" id="PR:Q9XPI7"/>
<dbReference type="Proteomes" id="UP000002195">
    <property type="component" value="Mitochondrion"/>
</dbReference>
<dbReference type="GO" id="GO:0005763">
    <property type="term" value="C:mitochondrial small ribosomal subunit"/>
    <property type="evidence" value="ECO:0000250"/>
    <property type="project" value="UniProtKB"/>
</dbReference>
<dbReference type="GO" id="GO:0003735">
    <property type="term" value="F:structural constituent of ribosome"/>
    <property type="evidence" value="ECO:0000318"/>
    <property type="project" value="GO_Central"/>
</dbReference>
<dbReference type="GO" id="GO:0006412">
    <property type="term" value="P:translation"/>
    <property type="evidence" value="ECO:0007669"/>
    <property type="project" value="InterPro"/>
</dbReference>
<dbReference type="CDD" id="cd01425">
    <property type="entry name" value="RPS2"/>
    <property type="match status" value="1"/>
</dbReference>
<dbReference type="Gene3D" id="3.40.50.10490">
    <property type="entry name" value="Glucose-6-phosphate isomerase like protein, domain 1"/>
    <property type="match status" value="1"/>
</dbReference>
<dbReference type="HAMAP" id="MF_00291_B">
    <property type="entry name" value="Ribosomal_uS2_B"/>
    <property type="match status" value="1"/>
</dbReference>
<dbReference type="InterPro" id="IPR001865">
    <property type="entry name" value="Ribosomal_uS2"/>
</dbReference>
<dbReference type="InterPro" id="IPR005706">
    <property type="entry name" value="Ribosomal_uS2_bac/mit/plastid"/>
</dbReference>
<dbReference type="InterPro" id="IPR023591">
    <property type="entry name" value="Ribosomal_uS2_flav_dom_sf"/>
</dbReference>
<dbReference type="PANTHER" id="PTHR12534">
    <property type="entry name" value="30S RIBOSOMAL PROTEIN S2 PROKARYOTIC AND ORGANELLAR"/>
    <property type="match status" value="1"/>
</dbReference>
<dbReference type="PANTHER" id="PTHR12534:SF0">
    <property type="entry name" value="SMALL RIBOSOMAL SUBUNIT PROTEIN US2M"/>
    <property type="match status" value="1"/>
</dbReference>
<dbReference type="Pfam" id="PF00318">
    <property type="entry name" value="Ribosomal_S2"/>
    <property type="match status" value="1"/>
</dbReference>
<dbReference type="SUPFAM" id="SSF52313">
    <property type="entry name" value="Ribosomal protein S2"/>
    <property type="match status" value="1"/>
</dbReference>
<gene>
    <name type="primary">mrps2</name>
    <name type="synonym">rps2</name>
    <name type="ORF">DDB_G0294050</name>
</gene>